<keyword id="KW-0143">Chaperone</keyword>
<keyword id="KW-0963">Cytoplasm</keyword>
<keyword id="KW-1015">Disulfide bond</keyword>
<keyword id="KW-0676">Redox-active center</keyword>
<keyword id="KW-0862">Zinc</keyword>
<feature type="chain" id="PRO_1000015538" description="33 kDa chaperonin">
    <location>
        <begin position="1"/>
        <end position="319"/>
    </location>
</feature>
<feature type="region of interest" description="Disordered" evidence="2">
    <location>
        <begin position="300"/>
        <end position="319"/>
    </location>
</feature>
<feature type="disulfide bond" description="Redox-active" evidence="1">
    <location>
        <begin position="239"/>
        <end position="241"/>
    </location>
</feature>
<feature type="disulfide bond" description="Redox-active" evidence="1">
    <location>
        <begin position="272"/>
        <end position="275"/>
    </location>
</feature>
<sequence>MSDKLIRAIAKDGMIRIFATETTELVDEASKIHDCTPTAAAALGRMLTAGTMMGAMLKSDKEVVTLQINGGGMAKGVTVTAYSDCSVKGYIGNPHVDLPLNTENGKLNVGEAIGKNGGLTVIKDLGLKDPYVGQVPIYSGEIAEDLAYYFTASEQIPSAVALGVLVDRDHSIKKAGGFIIQLLPGADELLGDLLTYRLDEIPSLTTMLSEGKTIEEVIEFIFDGMDLKILEEETPKYKCDCSREKVERALLSIGYKDLKELYDEGKEEELKCHFCNKAYKFTKEDIGKLLEEKEKSIADEVSEEMKKAEEKEKEEKNKK</sequence>
<name>HSLO_CLOP1</name>
<accession>Q0TP59</accession>
<evidence type="ECO:0000255" key="1">
    <source>
        <dbReference type="HAMAP-Rule" id="MF_00117"/>
    </source>
</evidence>
<evidence type="ECO:0000256" key="2">
    <source>
        <dbReference type="SAM" id="MobiDB-lite"/>
    </source>
</evidence>
<protein>
    <recommendedName>
        <fullName evidence="1">33 kDa chaperonin</fullName>
    </recommendedName>
    <alternativeName>
        <fullName evidence="1">Heat shock protein 33 homolog</fullName>
        <shortName evidence="1">HSP33</shortName>
    </alternativeName>
</protein>
<comment type="function">
    <text evidence="1">Redox regulated molecular chaperone. Protects both thermally unfolding and oxidatively damaged proteins from irreversible aggregation. Plays an important role in the bacterial defense system toward oxidative stress.</text>
</comment>
<comment type="subcellular location">
    <subcellularLocation>
        <location evidence="1">Cytoplasm</location>
    </subcellularLocation>
</comment>
<comment type="PTM">
    <text evidence="1">Under oxidizing conditions two disulfide bonds are formed involving the reactive cysteines. Under reducing conditions zinc is bound to the reactive cysteines and the protein is inactive.</text>
</comment>
<comment type="similarity">
    <text evidence="1">Belongs to the HSP33 family.</text>
</comment>
<organism>
    <name type="scientific">Clostridium perfringens (strain ATCC 13124 / DSM 756 / JCM 1290 / NCIMB 6125 / NCTC 8237 / Type A)</name>
    <dbReference type="NCBI Taxonomy" id="195103"/>
    <lineage>
        <taxon>Bacteria</taxon>
        <taxon>Bacillati</taxon>
        <taxon>Bacillota</taxon>
        <taxon>Clostridia</taxon>
        <taxon>Eubacteriales</taxon>
        <taxon>Clostridiaceae</taxon>
        <taxon>Clostridium</taxon>
    </lineage>
</organism>
<dbReference type="EMBL" id="CP000246">
    <property type="protein sequence ID" value="ABG83356.1"/>
    <property type="molecule type" value="Genomic_DNA"/>
</dbReference>
<dbReference type="RefSeq" id="WP_003454848.1">
    <property type="nucleotide sequence ID" value="NC_008261.1"/>
</dbReference>
<dbReference type="SMR" id="Q0TP59"/>
<dbReference type="STRING" id="195103.CPF_2157"/>
<dbReference type="PaxDb" id="195103-CPF_2157"/>
<dbReference type="GeneID" id="93001562"/>
<dbReference type="KEGG" id="cpf:CPF_2157"/>
<dbReference type="eggNOG" id="COG1281">
    <property type="taxonomic scope" value="Bacteria"/>
</dbReference>
<dbReference type="HOGENOM" id="CLU_054493_1_0_9"/>
<dbReference type="Proteomes" id="UP000001823">
    <property type="component" value="Chromosome"/>
</dbReference>
<dbReference type="GO" id="GO:0005737">
    <property type="term" value="C:cytoplasm"/>
    <property type="evidence" value="ECO:0007669"/>
    <property type="project" value="UniProtKB-SubCell"/>
</dbReference>
<dbReference type="GO" id="GO:0044183">
    <property type="term" value="F:protein folding chaperone"/>
    <property type="evidence" value="ECO:0007669"/>
    <property type="project" value="TreeGrafter"/>
</dbReference>
<dbReference type="GO" id="GO:0051082">
    <property type="term" value="F:unfolded protein binding"/>
    <property type="evidence" value="ECO:0007669"/>
    <property type="project" value="UniProtKB-UniRule"/>
</dbReference>
<dbReference type="GO" id="GO:0042026">
    <property type="term" value="P:protein refolding"/>
    <property type="evidence" value="ECO:0007669"/>
    <property type="project" value="TreeGrafter"/>
</dbReference>
<dbReference type="CDD" id="cd00498">
    <property type="entry name" value="Hsp33"/>
    <property type="match status" value="1"/>
</dbReference>
<dbReference type="Gene3D" id="3.55.30.10">
    <property type="entry name" value="Hsp33 domain"/>
    <property type="match status" value="1"/>
</dbReference>
<dbReference type="Gene3D" id="3.90.1280.10">
    <property type="entry name" value="HSP33 redox switch-like"/>
    <property type="match status" value="1"/>
</dbReference>
<dbReference type="HAMAP" id="MF_00117">
    <property type="entry name" value="HslO"/>
    <property type="match status" value="1"/>
</dbReference>
<dbReference type="InterPro" id="IPR000397">
    <property type="entry name" value="Heat_shock_Hsp33"/>
</dbReference>
<dbReference type="InterPro" id="IPR016154">
    <property type="entry name" value="Heat_shock_Hsp33_C"/>
</dbReference>
<dbReference type="InterPro" id="IPR016153">
    <property type="entry name" value="Heat_shock_Hsp33_N"/>
</dbReference>
<dbReference type="NCBIfam" id="NF001033">
    <property type="entry name" value="PRK00114.1"/>
    <property type="match status" value="1"/>
</dbReference>
<dbReference type="PANTHER" id="PTHR30111">
    <property type="entry name" value="33 KDA CHAPERONIN"/>
    <property type="match status" value="1"/>
</dbReference>
<dbReference type="PANTHER" id="PTHR30111:SF1">
    <property type="entry name" value="33 KDA CHAPERONIN"/>
    <property type="match status" value="1"/>
</dbReference>
<dbReference type="Pfam" id="PF01430">
    <property type="entry name" value="HSP33"/>
    <property type="match status" value="1"/>
</dbReference>
<dbReference type="PIRSF" id="PIRSF005261">
    <property type="entry name" value="Heat_shock_Hsp33"/>
    <property type="match status" value="1"/>
</dbReference>
<dbReference type="SUPFAM" id="SSF64397">
    <property type="entry name" value="Hsp33 domain"/>
    <property type="match status" value="1"/>
</dbReference>
<dbReference type="SUPFAM" id="SSF118352">
    <property type="entry name" value="HSP33 redox switch-like"/>
    <property type="match status" value="1"/>
</dbReference>
<proteinExistence type="inferred from homology"/>
<gene>
    <name evidence="1" type="primary">hslO</name>
    <name type="ordered locus">CPF_2157</name>
</gene>
<reference key="1">
    <citation type="journal article" date="2006" name="Genome Res.">
        <title>Skewed genomic variability in strains of the toxigenic bacterial pathogen, Clostridium perfringens.</title>
        <authorList>
            <person name="Myers G.S.A."/>
            <person name="Rasko D.A."/>
            <person name="Cheung J.K."/>
            <person name="Ravel J."/>
            <person name="Seshadri R."/>
            <person name="DeBoy R.T."/>
            <person name="Ren Q."/>
            <person name="Varga J."/>
            <person name="Awad M.M."/>
            <person name="Brinkac L.M."/>
            <person name="Daugherty S.C."/>
            <person name="Haft D.H."/>
            <person name="Dodson R.J."/>
            <person name="Madupu R."/>
            <person name="Nelson W.C."/>
            <person name="Rosovitz M.J."/>
            <person name="Sullivan S.A."/>
            <person name="Khouri H."/>
            <person name="Dimitrov G.I."/>
            <person name="Watkins K.L."/>
            <person name="Mulligan S."/>
            <person name="Benton J."/>
            <person name="Radune D."/>
            <person name="Fisher D.J."/>
            <person name="Atkins H.S."/>
            <person name="Hiscox T."/>
            <person name="Jost B.H."/>
            <person name="Billington S.J."/>
            <person name="Songer J.G."/>
            <person name="McClane B.A."/>
            <person name="Titball R.W."/>
            <person name="Rood J.I."/>
            <person name="Melville S.B."/>
            <person name="Paulsen I.T."/>
        </authorList>
    </citation>
    <scope>NUCLEOTIDE SEQUENCE [LARGE SCALE GENOMIC DNA]</scope>
    <source>
        <strain>ATCC 13124 / DSM 756 / JCM 1290 / NCIMB 6125 / NCTC 8237 / S 107 / Type A</strain>
    </source>
</reference>